<keyword id="KW-0004">4Fe-4S</keyword>
<keyword id="KW-0408">Iron</keyword>
<keyword id="KW-0411">Iron-sulfur</keyword>
<keyword id="KW-0479">Metal-binding</keyword>
<keyword id="KW-0489">Methyltransferase</keyword>
<keyword id="KW-0698">rRNA processing</keyword>
<keyword id="KW-0949">S-adenosyl-L-methionine</keyword>
<keyword id="KW-0808">Transferase</keyword>
<gene>
    <name evidence="1" type="primary">rlmD</name>
    <name type="synonym">rumA</name>
    <name type="ordered locus">Shewmr4_1110</name>
</gene>
<sequence length="449" mass="48857">MAQFFKAKPNSSKQLSAKQSFSVHQLDHLGAGIAQHQGKVVFIPGALPSETVQAQLTEQKKNYARAKLIKVETPSAERVTPLCPHYQSCGGCDLQHMSLAGQREHKSAALVDIMAKFAGAEGNSVPALTGEGWHYRRRARLATLFDKNTKQLSLGFRASSSNQVVPIDSCLVLAKPLSDLIAPFAKLLNQLAAKSSLGHLELIDADNGHFAVIRITKSLNDKDMAKLAQFAEHHQIHICLQDNNGEFHGVNGTLLLPVYQLLDDKAGATPVSLTFTPGNFVQVNAQINKAMVAQALDWLAPQPGERILDLFCGMGNFSLPLAKLGAEVIGVEGVPDMVSQARENAAANGLSNLTFYHGDLSADLSCEPWMGKIDKLLLDPARAGAFESLQWLKKMKPRQVVYVSCNPASLARDSAVLLERGYKLQKLGLIDMFPQTHHIEAMALFELAK</sequence>
<protein>
    <recommendedName>
        <fullName evidence="1">23S rRNA (uracil(1939)-C(5))-methyltransferase RlmD</fullName>
        <ecNumber evidence="1">2.1.1.190</ecNumber>
    </recommendedName>
    <alternativeName>
        <fullName evidence="1">23S rRNA(m5U1939)-methyltransferase</fullName>
    </alternativeName>
</protein>
<comment type="function">
    <text evidence="1">Catalyzes the formation of 5-methyl-uridine at position 1939 (m5U1939) in 23S rRNA.</text>
</comment>
<comment type="catalytic activity">
    <reaction evidence="1">
        <text>uridine(1939) in 23S rRNA + S-adenosyl-L-methionine = 5-methyluridine(1939) in 23S rRNA + S-adenosyl-L-homocysteine + H(+)</text>
        <dbReference type="Rhea" id="RHEA:42908"/>
        <dbReference type="Rhea" id="RHEA-COMP:10278"/>
        <dbReference type="Rhea" id="RHEA-COMP:10279"/>
        <dbReference type="ChEBI" id="CHEBI:15378"/>
        <dbReference type="ChEBI" id="CHEBI:57856"/>
        <dbReference type="ChEBI" id="CHEBI:59789"/>
        <dbReference type="ChEBI" id="CHEBI:65315"/>
        <dbReference type="ChEBI" id="CHEBI:74447"/>
        <dbReference type="EC" id="2.1.1.190"/>
    </reaction>
</comment>
<comment type="similarity">
    <text evidence="1">Belongs to the class I-like SAM-binding methyltransferase superfamily. RNA M5U methyltransferase family. RlmD subfamily.</text>
</comment>
<comment type="sequence caution" evidence="2">
    <conflict type="erroneous initiation">
        <sequence resource="EMBL-CDS" id="ABI38190"/>
    </conflict>
</comment>
<proteinExistence type="inferred from homology"/>
<reference key="1">
    <citation type="submission" date="2006-08" db="EMBL/GenBank/DDBJ databases">
        <title>Complete sequence of Shewanella sp. MR-4.</title>
        <authorList>
            <consortium name="US DOE Joint Genome Institute"/>
            <person name="Copeland A."/>
            <person name="Lucas S."/>
            <person name="Lapidus A."/>
            <person name="Barry K."/>
            <person name="Detter J.C."/>
            <person name="Glavina del Rio T."/>
            <person name="Hammon N."/>
            <person name="Israni S."/>
            <person name="Dalin E."/>
            <person name="Tice H."/>
            <person name="Pitluck S."/>
            <person name="Kiss H."/>
            <person name="Brettin T."/>
            <person name="Bruce D."/>
            <person name="Han C."/>
            <person name="Tapia R."/>
            <person name="Gilna P."/>
            <person name="Schmutz J."/>
            <person name="Larimer F."/>
            <person name="Land M."/>
            <person name="Hauser L."/>
            <person name="Kyrpides N."/>
            <person name="Mikhailova N."/>
            <person name="Nealson K."/>
            <person name="Konstantinidis K."/>
            <person name="Klappenbach J."/>
            <person name="Tiedje J."/>
            <person name="Richardson P."/>
        </authorList>
    </citation>
    <scope>NUCLEOTIDE SEQUENCE [LARGE SCALE GENOMIC DNA]</scope>
    <source>
        <strain>MR-4</strain>
    </source>
</reference>
<accession>Q0HL77</accession>
<name>RLMD_SHESM</name>
<dbReference type="EC" id="2.1.1.190" evidence="1"/>
<dbReference type="EMBL" id="CP000446">
    <property type="protein sequence ID" value="ABI38190.1"/>
    <property type="status" value="ALT_INIT"/>
    <property type="molecule type" value="Genomic_DNA"/>
</dbReference>
<dbReference type="RefSeq" id="WP_041408998.1">
    <property type="nucleotide sequence ID" value="NC_008321.1"/>
</dbReference>
<dbReference type="SMR" id="Q0HL77"/>
<dbReference type="KEGG" id="she:Shewmr4_1110"/>
<dbReference type="HOGENOM" id="CLU_014689_8_2_6"/>
<dbReference type="GO" id="GO:0051539">
    <property type="term" value="F:4 iron, 4 sulfur cluster binding"/>
    <property type="evidence" value="ECO:0007669"/>
    <property type="project" value="UniProtKB-KW"/>
</dbReference>
<dbReference type="GO" id="GO:0005506">
    <property type="term" value="F:iron ion binding"/>
    <property type="evidence" value="ECO:0007669"/>
    <property type="project" value="UniProtKB-UniRule"/>
</dbReference>
<dbReference type="GO" id="GO:0003723">
    <property type="term" value="F:RNA binding"/>
    <property type="evidence" value="ECO:0007669"/>
    <property type="project" value="InterPro"/>
</dbReference>
<dbReference type="GO" id="GO:0070041">
    <property type="term" value="F:rRNA (uridine-C5-)-methyltransferase activity"/>
    <property type="evidence" value="ECO:0007669"/>
    <property type="project" value="UniProtKB-UniRule"/>
</dbReference>
<dbReference type="GO" id="GO:0070475">
    <property type="term" value="P:rRNA base methylation"/>
    <property type="evidence" value="ECO:0007669"/>
    <property type="project" value="TreeGrafter"/>
</dbReference>
<dbReference type="CDD" id="cd02440">
    <property type="entry name" value="AdoMet_MTases"/>
    <property type="match status" value="1"/>
</dbReference>
<dbReference type="FunFam" id="3.40.50.150:FF:000009">
    <property type="entry name" value="23S rRNA (Uracil(1939)-C(5))-methyltransferase RlmD"/>
    <property type="match status" value="1"/>
</dbReference>
<dbReference type="FunFam" id="2.40.50.1070:FF:000017">
    <property type="entry name" value="23S rRNA (uracil(1939)-C(5))-methyltransferase RlmD"/>
    <property type="match status" value="1"/>
</dbReference>
<dbReference type="FunFam" id="2.40.50.140:FF:000097">
    <property type="entry name" value="23S rRNA (uracil(1939)-C(5))-methyltransferase RlmD"/>
    <property type="match status" value="1"/>
</dbReference>
<dbReference type="Gene3D" id="2.40.50.1070">
    <property type="match status" value="1"/>
</dbReference>
<dbReference type="Gene3D" id="2.40.50.140">
    <property type="entry name" value="Nucleic acid-binding proteins"/>
    <property type="match status" value="1"/>
</dbReference>
<dbReference type="Gene3D" id="3.40.50.150">
    <property type="entry name" value="Vaccinia Virus protein VP39"/>
    <property type="match status" value="1"/>
</dbReference>
<dbReference type="HAMAP" id="MF_01010">
    <property type="entry name" value="23SrRNA_methyltr_RlmD"/>
    <property type="match status" value="1"/>
</dbReference>
<dbReference type="InterPro" id="IPR001566">
    <property type="entry name" value="23S_rRNA_MeTrfase_RlmD"/>
</dbReference>
<dbReference type="InterPro" id="IPR030390">
    <property type="entry name" value="MeTrfase_TrmA_AS"/>
</dbReference>
<dbReference type="InterPro" id="IPR030391">
    <property type="entry name" value="MeTrfase_TrmA_CS"/>
</dbReference>
<dbReference type="InterPro" id="IPR012340">
    <property type="entry name" value="NA-bd_OB-fold"/>
</dbReference>
<dbReference type="InterPro" id="IPR029063">
    <property type="entry name" value="SAM-dependent_MTases_sf"/>
</dbReference>
<dbReference type="InterPro" id="IPR002792">
    <property type="entry name" value="TRAM_dom"/>
</dbReference>
<dbReference type="InterPro" id="IPR010280">
    <property type="entry name" value="U5_MeTrfase_fam"/>
</dbReference>
<dbReference type="NCBIfam" id="NF009639">
    <property type="entry name" value="PRK13168.1"/>
    <property type="match status" value="1"/>
</dbReference>
<dbReference type="NCBIfam" id="TIGR00479">
    <property type="entry name" value="rumA"/>
    <property type="match status" value="1"/>
</dbReference>
<dbReference type="PANTHER" id="PTHR11061:SF49">
    <property type="entry name" value="23S RRNA (URACIL(1939)-C(5))-METHYLTRANSFERASE RLMD"/>
    <property type="match status" value="1"/>
</dbReference>
<dbReference type="PANTHER" id="PTHR11061">
    <property type="entry name" value="RNA M5U METHYLTRANSFERASE"/>
    <property type="match status" value="1"/>
</dbReference>
<dbReference type="Pfam" id="PF01938">
    <property type="entry name" value="TRAM"/>
    <property type="match status" value="1"/>
</dbReference>
<dbReference type="Pfam" id="PF05958">
    <property type="entry name" value="tRNA_U5-meth_tr"/>
    <property type="match status" value="1"/>
</dbReference>
<dbReference type="SUPFAM" id="SSF50249">
    <property type="entry name" value="Nucleic acid-binding proteins"/>
    <property type="match status" value="1"/>
</dbReference>
<dbReference type="SUPFAM" id="SSF53335">
    <property type="entry name" value="S-adenosyl-L-methionine-dependent methyltransferases"/>
    <property type="match status" value="1"/>
</dbReference>
<dbReference type="PROSITE" id="PS51687">
    <property type="entry name" value="SAM_MT_RNA_M5U"/>
    <property type="match status" value="1"/>
</dbReference>
<dbReference type="PROSITE" id="PS50926">
    <property type="entry name" value="TRAM"/>
    <property type="match status" value="1"/>
</dbReference>
<dbReference type="PROSITE" id="PS01230">
    <property type="entry name" value="TRMA_1"/>
    <property type="match status" value="1"/>
</dbReference>
<dbReference type="PROSITE" id="PS01231">
    <property type="entry name" value="TRMA_2"/>
    <property type="match status" value="1"/>
</dbReference>
<feature type="chain" id="PRO_0000282064" description="23S rRNA (uracil(1939)-C(5))-methyltransferase RlmD">
    <location>
        <begin position="1"/>
        <end position="449"/>
    </location>
</feature>
<feature type="domain" description="TRAM" evidence="1">
    <location>
        <begin position="12"/>
        <end position="70"/>
    </location>
</feature>
<feature type="active site" description="Nucleophile" evidence="1">
    <location>
        <position position="405"/>
    </location>
</feature>
<feature type="binding site" evidence="1">
    <location>
        <position position="83"/>
    </location>
    <ligand>
        <name>[4Fe-4S] cluster</name>
        <dbReference type="ChEBI" id="CHEBI:49883"/>
    </ligand>
</feature>
<feature type="binding site" evidence="1">
    <location>
        <position position="89"/>
    </location>
    <ligand>
        <name>[4Fe-4S] cluster</name>
        <dbReference type="ChEBI" id="CHEBI:49883"/>
    </ligand>
</feature>
<feature type="binding site" evidence="1">
    <location>
        <position position="92"/>
    </location>
    <ligand>
        <name>[4Fe-4S] cluster</name>
        <dbReference type="ChEBI" id="CHEBI:49883"/>
    </ligand>
</feature>
<feature type="binding site" evidence="1">
    <location>
        <position position="170"/>
    </location>
    <ligand>
        <name>[4Fe-4S] cluster</name>
        <dbReference type="ChEBI" id="CHEBI:49883"/>
    </ligand>
</feature>
<feature type="binding site" evidence="1">
    <location>
        <position position="282"/>
    </location>
    <ligand>
        <name>S-adenosyl-L-methionine</name>
        <dbReference type="ChEBI" id="CHEBI:59789"/>
    </ligand>
</feature>
<feature type="binding site" evidence="1">
    <location>
        <position position="311"/>
    </location>
    <ligand>
        <name>S-adenosyl-L-methionine</name>
        <dbReference type="ChEBI" id="CHEBI:59789"/>
    </ligand>
</feature>
<feature type="binding site" evidence="1">
    <location>
        <position position="316"/>
    </location>
    <ligand>
        <name>S-adenosyl-L-methionine</name>
        <dbReference type="ChEBI" id="CHEBI:59789"/>
    </ligand>
</feature>
<feature type="binding site" evidence="1">
    <location>
        <position position="332"/>
    </location>
    <ligand>
        <name>S-adenosyl-L-methionine</name>
        <dbReference type="ChEBI" id="CHEBI:59789"/>
    </ligand>
</feature>
<feature type="binding site" evidence="1">
    <location>
        <position position="359"/>
    </location>
    <ligand>
        <name>S-adenosyl-L-methionine</name>
        <dbReference type="ChEBI" id="CHEBI:59789"/>
    </ligand>
</feature>
<feature type="binding site" evidence="1">
    <location>
        <position position="379"/>
    </location>
    <ligand>
        <name>S-adenosyl-L-methionine</name>
        <dbReference type="ChEBI" id="CHEBI:59789"/>
    </ligand>
</feature>
<evidence type="ECO:0000255" key="1">
    <source>
        <dbReference type="HAMAP-Rule" id="MF_01010"/>
    </source>
</evidence>
<evidence type="ECO:0000305" key="2"/>
<organism>
    <name type="scientific">Shewanella sp. (strain MR-4)</name>
    <dbReference type="NCBI Taxonomy" id="60480"/>
    <lineage>
        <taxon>Bacteria</taxon>
        <taxon>Pseudomonadati</taxon>
        <taxon>Pseudomonadota</taxon>
        <taxon>Gammaproteobacteria</taxon>
        <taxon>Alteromonadales</taxon>
        <taxon>Shewanellaceae</taxon>
        <taxon>Shewanella</taxon>
    </lineage>
</organism>